<gene>
    <name evidence="1" type="primary">dnaJ</name>
    <name type="ordered locus">Bcep18194_A3840</name>
</gene>
<organism>
    <name type="scientific">Burkholderia lata (strain ATCC 17760 / DSM 23089 / LMG 22485 / NCIMB 9086 / R18194 / 383)</name>
    <dbReference type="NCBI Taxonomy" id="482957"/>
    <lineage>
        <taxon>Bacteria</taxon>
        <taxon>Pseudomonadati</taxon>
        <taxon>Pseudomonadota</taxon>
        <taxon>Betaproteobacteria</taxon>
        <taxon>Burkholderiales</taxon>
        <taxon>Burkholderiaceae</taxon>
        <taxon>Burkholderia</taxon>
        <taxon>Burkholderia cepacia complex</taxon>
    </lineage>
</organism>
<protein>
    <recommendedName>
        <fullName evidence="1">Chaperone protein DnaJ</fullName>
    </recommendedName>
</protein>
<sequence length="378" mass="40866">MAKRDYYEVLGVAKNAGDDEIKKAYRKLAMKYHPDRNPDNKDAEEHFKEVKEAYEMLSDGQKRAAYDQYGHAGVDPNMGGAGAQGFGGFADAFGDIFGDIFGQAAGGAARGGRGGPQVYRGADLRYSMEITLEQAAHGYDTQIRVPSWVSCEVCHGSGAKPGTKPETCPTCHGQGTVRMSQGFFSIQQTCPKCHGTGTYIPEPCVHCHGSGKVKETKTLEVKIPAGIDDGMRIRSAGNGEPGINGGPPGDLYVEIHIKPHSVFERDGDDLHCQMPIPFTTAALGGEIEVPTLAGRASFPVPEGTQSGKTFRLRGKGIKGLRSSIAGDLYVHVQVETPVKLTDNQRDLLKQFEKSLAEGGARHSPQSKSWFDRVKSFFE</sequence>
<proteinExistence type="inferred from homology"/>
<name>DNAJ_BURL3</name>
<evidence type="ECO:0000255" key="1">
    <source>
        <dbReference type="HAMAP-Rule" id="MF_01152"/>
    </source>
</evidence>
<keyword id="KW-0143">Chaperone</keyword>
<keyword id="KW-0963">Cytoplasm</keyword>
<keyword id="KW-0235">DNA replication</keyword>
<keyword id="KW-0479">Metal-binding</keyword>
<keyword id="KW-0677">Repeat</keyword>
<keyword id="KW-0346">Stress response</keyword>
<keyword id="KW-0862">Zinc</keyword>
<keyword id="KW-0863">Zinc-finger</keyword>
<accession>Q39JC7</accession>
<feature type="chain" id="PRO_1000085163" description="Chaperone protein DnaJ">
    <location>
        <begin position="1"/>
        <end position="378"/>
    </location>
</feature>
<feature type="domain" description="J" evidence="1">
    <location>
        <begin position="5"/>
        <end position="70"/>
    </location>
</feature>
<feature type="repeat" description="CXXCXGXG motif">
    <location>
        <begin position="151"/>
        <end position="158"/>
    </location>
</feature>
<feature type="repeat" description="CXXCXGXG motif">
    <location>
        <begin position="168"/>
        <end position="175"/>
    </location>
</feature>
<feature type="repeat" description="CXXCXGXG motif">
    <location>
        <begin position="190"/>
        <end position="197"/>
    </location>
</feature>
<feature type="repeat" description="CXXCXGXG motif">
    <location>
        <begin position="204"/>
        <end position="211"/>
    </location>
</feature>
<feature type="zinc finger region" description="CR-type" evidence="1">
    <location>
        <begin position="138"/>
        <end position="216"/>
    </location>
</feature>
<feature type="binding site" evidence="1">
    <location>
        <position position="151"/>
    </location>
    <ligand>
        <name>Zn(2+)</name>
        <dbReference type="ChEBI" id="CHEBI:29105"/>
        <label>1</label>
    </ligand>
</feature>
<feature type="binding site" evidence="1">
    <location>
        <position position="154"/>
    </location>
    <ligand>
        <name>Zn(2+)</name>
        <dbReference type="ChEBI" id="CHEBI:29105"/>
        <label>1</label>
    </ligand>
</feature>
<feature type="binding site" evidence="1">
    <location>
        <position position="168"/>
    </location>
    <ligand>
        <name>Zn(2+)</name>
        <dbReference type="ChEBI" id="CHEBI:29105"/>
        <label>2</label>
    </ligand>
</feature>
<feature type="binding site" evidence="1">
    <location>
        <position position="171"/>
    </location>
    <ligand>
        <name>Zn(2+)</name>
        <dbReference type="ChEBI" id="CHEBI:29105"/>
        <label>2</label>
    </ligand>
</feature>
<feature type="binding site" evidence="1">
    <location>
        <position position="190"/>
    </location>
    <ligand>
        <name>Zn(2+)</name>
        <dbReference type="ChEBI" id="CHEBI:29105"/>
        <label>2</label>
    </ligand>
</feature>
<feature type="binding site" evidence="1">
    <location>
        <position position="193"/>
    </location>
    <ligand>
        <name>Zn(2+)</name>
        <dbReference type="ChEBI" id="CHEBI:29105"/>
        <label>2</label>
    </ligand>
</feature>
<feature type="binding site" evidence="1">
    <location>
        <position position="204"/>
    </location>
    <ligand>
        <name>Zn(2+)</name>
        <dbReference type="ChEBI" id="CHEBI:29105"/>
        <label>1</label>
    </ligand>
</feature>
<feature type="binding site" evidence="1">
    <location>
        <position position="207"/>
    </location>
    <ligand>
        <name>Zn(2+)</name>
        <dbReference type="ChEBI" id="CHEBI:29105"/>
        <label>1</label>
    </ligand>
</feature>
<reference key="1">
    <citation type="submission" date="2005-10" db="EMBL/GenBank/DDBJ databases">
        <title>Complete sequence of chromosome 1 of Burkholderia sp. 383.</title>
        <authorList>
            <consortium name="US DOE Joint Genome Institute"/>
            <person name="Copeland A."/>
            <person name="Lucas S."/>
            <person name="Lapidus A."/>
            <person name="Barry K."/>
            <person name="Detter J.C."/>
            <person name="Glavina T."/>
            <person name="Hammon N."/>
            <person name="Israni S."/>
            <person name="Pitluck S."/>
            <person name="Chain P."/>
            <person name="Malfatti S."/>
            <person name="Shin M."/>
            <person name="Vergez L."/>
            <person name="Schmutz J."/>
            <person name="Larimer F."/>
            <person name="Land M."/>
            <person name="Kyrpides N."/>
            <person name="Lykidis A."/>
            <person name="Richardson P."/>
        </authorList>
    </citation>
    <scope>NUCLEOTIDE SEQUENCE [LARGE SCALE GENOMIC DNA]</scope>
    <source>
        <strain>ATCC 17760 / DSM 23089 / LMG 22485 / NCIMB 9086 / R18194 / 383</strain>
    </source>
</reference>
<comment type="function">
    <text evidence="1">Participates actively in the response to hyperosmotic and heat shock by preventing the aggregation of stress-denatured proteins and by disaggregating proteins, also in an autonomous, DnaK-independent fashion. Unfolded proteins bind initially to DnaJ; upon interaction with the DnaJ-bound protein, DnaK hydrolyzes its bound ATP, resulting in the formation of a stable complex. GrpE releases ADP from DnaK; ATP binding to DnaK triggers the release of the substrate protein, thus completing the reaction cycle. Several rounds of ATP-dependent interactions between DnaJ, DnaK and GrpE are required for fully efficient folding. Also involved, together with DnaK and GrpE, in the DNA replication of plasmids through activation of initiation proteins.</text>
</comment>
<comment type="cofactor">
    <cofactor evidence="1">
        <name>Zn(2+)</name>
        <dbReference type="ChEBI" id="CHEBI:29105"/>
    </cofactor>
    <text evidence="1">Binds 2 Zn(2+) ions per monomer.</text>
</comment>
<comment type="subunit">
    <text evidence="1">Homodimer.</text>
</comment>
<comment type="subcellular location">
    <subcellularLocation>
        <location evidence="1">Cytoplasm</location>
    </subcellularLocation>
</comment>
<comment type="domain">
    <text evidence="1">The J domain is necessary and sufficient to stimulate DnaK ATPase activity. Zinc center 1 plays an important role in the autonomous, DnaK-independent chaperone activity of DnaJ. Zinc center 2 is essential for interaction with DnaK and for DnaJ activity.</text>
</comment>
<comment type="similarity">
    <text evidence="1">Belongs to the DnaJ family.</text>
</comment>
<dbReference type="EMBL" id="CP000151">
    <property type="protein sequence ID" value="ABB07439.1"/>
    <property type="molecule type" value="Genomic_DNA"/>
</dbReference>
<dbReference type="RefSeq" id="WP_011351025.1">
    <property type="nucleotide sequence ID" value="NZ_WNDV01000059.1"/>
</dbReference>
<dbReference type="SMR" id="Q39JC7"/>
<dbReference type="GeneID" id="45093751"/>
<dbReference type="KEGG" id="bur:Bcep18194_A3840"/>
<dbReference type="PATRIC" id="fig|482957.22.peg.707"/>
<dbReference type="HOGENOM" id="CLU_017633_0_7_4"/>
<dbReference type="Proteomes" id="UP000002705">
    <property type="component" value="Chromosome 1"/>
</dbReference>
<dbReference type="GO" id="GO:0005737">
    <property type="term" value="C:cytoplasm"/>
    <property type="evidence" value="ECO:0007669"/>
    <property type="project" value="UniProtKB-SubCell"/>
</dbReference>
<dbReference type="GO" id="GO:0005524">
    <property type="term" value="F:ATP binding"/>
    <property type="evidence" value="ECO:0007669"/>
    <property type="project" value="InterPro"/>
</dbReference>
<dbReference type="GO" id="GO:0031072">
    <property type="term" value="F:heat shock protein binding"/>
    <property type="evidence" value="ECO:0007669"/>
    <property type="project" value="InterPro"/>
</dbReference>
<dbReference type="GO" id="GO:0051082">
    <property type="term" value="F:unfolded protein binding"/>
    <property type="evidence" value="ECO:0007669"/>
    <property type="project" value="UniProtKB-UniRule"/>
</dbReference>
<dbReference type="GO" id="GO:0008270">
    <property type="term" value="F:zinc ion binding"/>
    <property type="evidence" value="ECO:0007669"/>
    <property type="project" value="UniProtKB-UniRule"/>
</dbReference>
<dbReference type="GO" id="GO:0051085">
    <property type="term" value="P:chaperone cofactor-dependent protein refolding"/>
    <property type="evidence" value="ECO:0007669"/>
    <property type="project" value="TreeGrafter"/>
</dbReference>
<dbReference type="GO" id="GO:0006260">
    <property type="term" value="P:DNA replication"/>
    <property type="evidence" value="ECO:0007669"/>
    <property type="project" value="UniProtKB-KW"/>
</dbReference>
<dbReference type="GO" id="GO:0042026">
    <property type="term" value="P:protein refolding"/>
    <property type="evidence" value="ECO:0007669"/>
    <property type="project" value="TreeGrafter"/>
</dbReference>
<dbReference type="GO" id="GO:0009408">
    <property type="term" value="P:response to heat"/>
    <property type="evidence" value="ECO:0007669"/>
    <property type="project" value="InterPro"/>
</dbReference>
<dbReference type="CDD" id="cd06257">
    <property type="entry name" value="DnaJ"/>
    <property type="match status" value="1"/>
</dbReference>
<dbReference type="CDD" id="cd10747">
    <property type="entry name" value="DnaJ_C"/>
    <property type="match status" value="1"/>
</dbReference>
<dbReference type="CDD" id="cd10719">
    <property type="entry name" value="DnaJ_zf"/>
    <property type="match status" value="1"/>
</dbReference>
<dbReference type="FunFam" id="1.10.287.110:FF:000031">
    <property type="entry name" value="Molecular chaperone DnaJ"/>
    <property type="match status" value="1"/>
</dbReference>
<dbReference type="FunFam" id="2.10.230.10:FF:000002">
    <property type="entry name" value="Molecular chaperone DnaJ"/>
    <property type="match status" value="1"/>
</dbReference>
<dbReference type="FunFam" id="2.60.260.20:FF:000004">
    <property type="entry name" value="Molecular chaperone DnaJ"/>
    <property type="match status" value="1"/>
</dbReference>
<dbReference type="Gene3D" id="1.10.287.110">
    <property type="entry name" value="DnaJ domain"/>
    <property type="match status" value="1"/>
</dbReference>
<dbReference type="Gene3D" id="2.10.230.10">
    <property type="entry name" value="Heat shock protein DnaJ, cysteine-rich domain"/>
    <property type="match status" value="1"/>
</dbReference>
<dbReference type="Gene3D" id="2.60.260.20">
    <property type="entry name" value="Urease metallochaperone UreE, N-terminal domain"/>
    <property type="match status" value="2"/>
</dbReference>
<dbReference type="HAMAP" id="MF_01152">
    <property type="entry name" value="DnaJ"/>
    <property type="match status" value="1"/>
</dbReference>
<dbReference type="InterPro" id="IPR012724">
    <property type="entry name" value="DnaJ"/>
</dbReference>
<dbReference type="InterPro" id="IPR002939">
    <property type="entry name" value="DnaJ_C"/>
</dbReference>
<dbReference type="InterPro" id="IPR001623">
    <property type="entry name" value="DnaJ_domain"/>
</dbReference>
<dbReference type="InterPro" id="IPR018253">
    <property type="entry name" value="DnaJ_domain_CS"/>
</dbReference>
<dbReference type="InterPro" id="IPR008971">
    <property type="entry name" value="HSP40/DnaJ_pept-bd"/>
</dbReference>
<dbReference type="InterPro" id="IPR001305">
    <property type="entry name" value="HSP_DnaJ_Cys-rich_dom"/>
</dbReference>
<dbReference type="InterPro" id="IPR036410">
    <property type="entry name" value="HSP_DnaJ_Cys-rich_dom_sf"/>
</dbReference>
<dbReference type="InterPro" id="IPR036869">
    <property type="entry name" value="J_dom_sf"/>
</dbReference>
<dbReference type="NCBIfam" id="TIGR02349">
    <property type="entry name" value="DnaJ_bact"/>
    <property type="match status" value="1"/>
</dbReference>
<dbReference type="NCBIfam" id="NF008035">
    <property type="entry name" value="PRK10767.1"/>
    <property type="match status" value="1"/>
</dbReference>
<dbReference type="PANTHER" id="PTHR43096:SF48">
    <property type="entry name" value="CHAPERONE PROTEIN DNAJ"/>
    <property type="match status" value="1"/>
</dbReference>
<dbReference type="PANTHER" id="PTHR43096">
    <property type="entry name" value="DNAJ HOMOLOG 1, MITOCHONDRIAL-RELATED"/>
    <property type="match status" value="1"/>
</dbReference>
<dbReference type="Pfam" id="PF00226">
    <property type="entry name" value="DnaJ"/>
    <property type="match status" value="1"/>
</dbReference>
<dbReference type="Pfam" id="PF01556">
    <property type="entry name" value="DnaJ_C"/>
    <property type="match status" value="1"/>
</dbReference>
<dbReference type="Pfam" id="PF00684">
    <property type="entry name" value="DnaJ_CXXCXGXG"/>
    <property type="match status" value="1"/>
</dbReference>
<dbReference type="PRINTS" id="PR00625">
    <property type="entry name" value="JDOMAIN"/>
</dbReference>
<dbReference type="SMART" id="SM00271">
    <property type="entry name" value="DnaJ"/>
    <property type="match status" value="1"/>
</dbReference>
<dbReference type="SUPFAM" id="SSF46565">
    <property type="entry name" value="Chaperone J-domain"/>
    <property type="match status" value="1"/>
</dbReference>
<dbReference type="SUPFAM" id="SSF57938">
    <property type="entry name" value="DnaJ/Hsp40 cysteine-rich domain"/>
    <property type="match status" value="1"/>
</dbReference>
<dbReference type="SUPFAM" id="SSF49493">
    <property type="entry name" value="HSP40/DnaJ peptide-binding domain"/>
    <property type="match status" value="2"/>
</dbReference>
<dbReference type="PROSITE" id="PS00636">
    <property type="entry name" value="DNAJ_1"/>
    <property type="match status" value="1"/>
</dbReference>
<dbReference type="PROSITE" id="PS50076">
    <property type="entry name" value="DNAJ_2"/>
    <property type="match status" value="1"/>
</dbReference>
<dbReference type="PROSITE" id="PS51188">
    <property type="entry name" value="ZF_CR"/>
    <property type="match status" value="1"/>
</dbReference>